<feature type="chain" id="PRO_1000196379" description="Small ribosomal subunit protein bS16">
    <location>
        <begin position="1"/>
        <end position="82"/>
    </location>
</feature>
<accession>B1WYX6</accession>
<keyword id="KW-1185">Reference proteome</keyword>
<keyword id="KW-0687">Ribonucleoprotein</keyword>
<keyword id="KW-0689">Ribosomal protein</keyword>
<reference key="1">
    <citation type="journal article" date="2008" name="Proc. Natl. Acad. Sci. U.S.A.">
        <title>The genome of Cyanothece 51142, a unicellular diazotrophic cyanobacterium important in the marine nitrogen cycle.</title>
        <authorList>
            <person name="Welsh E.A."/>
            <person name="Liberton M."/>
            <person name="Stoeckel J."/>
            <person name="Loh T."/>
            <person name="Elvitigala T."/>
            <person name="Wang C."/>
            <person name="Wollam A."/>
            <person name="Fulton R.S."/>
            <person name="Clifton S.W."/>
            <person name="Jacobs J.M."/>
            <person name="Aurora R."/>
            <person name="Ghosh B.K."/>
            <person name="Sherman L.A."/>
            <person name="Smith R.D."/>
            <person name="Wilson R.K."/>
            <person name="Pakrasi H.B."/>
        </authorList>
    </citation>
    <scope>NUCLEOTIDE SEQUENCE [LARGE SCALE GENOMIC DNA]</scope>
    <source>
        <strain>ATCC 51142 / BH68</strain>
    </source>
</reference>
<evidence type="ECO:0000255" key="1">
    <source>
        <dbReference type="HAMAP-Rule" id="MF_00385"/>
    </source>
</evidence>
<evidence type="ECO:0000305" key="2"/>
<dbReference type="EMBL" id="CP000806">
    <property type="protein sequence ID" value="ACB52740.1"/>
    <property type="molecule type" value="Genomic_DNA"/>
</dbReference>
<dbReference type="RefSeq" id="WP_009545437.1">
    <property type="nucleotide sequence ID" value="NC_010546.1"/>
</dbReference>
<dbReference type="SMR" id="B1WYX6"/>
<dbReference type="STRING" id="43989.cce_3392"/>
<dbReference type="KEGG" id="cyt:cce_3392"/>
<dbReference type="eggNOG" id="COG0228">
    <property type="taxonomic scope" value="Bacteria"/>
</dbReference>
<dbReference type="HOGENOM" id="CLU_100590_5_2_3"/>
<dbReference type="OrthoDB" id="9807878at2"/>
<dbReference type="Proteomes" id="UP000001203">
    <property type="component" value="Chromosome circular"/>
</dbReference>
<dbReference type="GO" id="GO:0005737">
    <property type="term" value="C:cytoplasm"/>
    <property type="evidence" value="ECO:0007669"/>
    <property type="project" value="UniProtKB-ARBA"/>
</dbReference>
<dbReference type="GO" id="GO:0015935">
    <property type="term" value="C:small ribosomal subunit"/>
    <property type="evidence" value="ECO:0007669"/>
    <property type="project" value="TreeGrafter"/>
</dbReference>
<dbReference type="GO" id="GO:0003735">
    <property type="term" value="F:structural constituent of ribosome"/>
    <property type="evidence" value="ECO:0007669"/>
    <property type="project" value="InterPro"/>
</dbReference>
<dbReference type="GO" id="GO:0006412">
    <property type="term" value="P:translation"/>
    <property type="evidence" value="ECO:0007669"/>
    <property type="project" value="UniProtKB-UniRule"/>
</dbReference>
<dbReference type="FunFam" id="3.30.1320.10:FF:000016">
    <property type="entry name" value="30S ribosomal protein S16"/>
    <property type="match status" value="1"/>
</dbReference>
<dbReference type="Gene3D" id="3.30.1320.10">
    <property type="match status" value="1"/>
</dbReference>
<dbReference type="HAMAP" id="MF_00385">
    <property type="entry name" value="Ribosomal_bS16"/>
    <property type="match status" value="1"/>
</dbReference>
<dbReference type="InterPro" id="IPR000307">
    <property type="entry name" value="Ribosomal_bS16"/>
</dbReference>
<dbReference type="InterPro" id="IPR023803">
    <property type="entry name" value="Ribosomal_bS16_dom_sf"/>
</dbReference>
<dbReference type="NCBIfam" id="TIGR00002">
    <property type="entry name" value="S16"/>
    <property type="match status" value="1"/>
</dbReference>
<dbReference type="PANTHER" id="PTHR12919">
    <property type="entry name" value="30S RIBOSOMAL PROTEIN S16"/>
    <property type="match status" value="1"/>
</dbReference>
<dbReference type="PANTHER" id="PTHR12919:SF20">
    <property type="entry name" value="SMALL RIBOSOMAL SUBUNIT PROTEIN BS16M"/>
    <property type="match status" value="1"/>
</dbReference>
<dbReference type="Pfam" id="PF00886">
    <property type="entry name" value="Ribosomal_S16"/>
    <property type="match status" value="1"/>
</dbReference>
<dbReference type="SUPFAM" id="SSF54565">
    <property type="entry name" value="Ribosomal protein S16"/>
    <property type="match status" value="1"/>
</dbReference>
<proteinExistence type="inferred from homology"/>
<protein>
    <recommendedName>
        <fullName evidence="1">Small ribosomal subunit protein bS16</fullName>
    </recommendedName>
    <alternativeName>
        <fullName evidence="2">30S ribosomal protein S16</fullName>
    </alternativeName>
</protein>
<comment type="similarity">
    <text evidence="1">Belongs to the bacterial ribosomal protein bS16 family.</text>
</comment>
<sequence>MIKLRLKKYGKKREVSYRIVAINSASRRDGRPLEELGFYNPRTDETRLNVPAIVTRLKQGAQPTETVRSILEKAKVFEQVNG</sequence>
<name>RS16_CROS5</name>
<gene>
    <name evidence="1" type="primary">rpsP</name>
    <name evidence="1" type="synonym">rps16</name>
    <name type="ordered locus">cce_3392</name>
</gene>
<organism>
    <name type="scientific">Crocosphaera subtropica (strain ATCC 51142 / BH68)</name>
    <name type="common">Cyanothece sp. (strain ATCC 51142)</name>
    <dbReference type="NCBI Taxonomy" id="43989"/>
    <lineage>
        <taxon>Bacteria</taxon>
        <taxon>Bacillati</taxon>
        <taxon>Cyanobacteriota</taxon>
        <taxon>Cyanophyceae</taxon>
        <taxon>Oscillatoriophycideae</taxon>
        <taxon>Chroococcales</taxon>
        <taxon>Aphanothecaceae</taxon>
        <taxon>Crocosphaera</taxon>
        <taxon>Crocosphaera subtropica</taxon>
    </lineage>
</organism>